<protein>
    <recommendedName>
        <fullName evidence="1">Elongation factor Ts</fullName>
        <shortName evidence="1">EF-Ts</shortName>
    </recommendedName>
</protein>
<feature type="chain" id="PRO_0000323467" description="Elongation factor Ts">
    <location>
        <begin position="1"/>
        <end position="346"/>
    </location>
</feature>
<feature type="region of interest" description="Involved in Mg(2+) ion dislocation from EF-Tu" evidence="1">
    <location>
        <begin position="80"/>
        <end position="83"/>
    </location>
</feature>
<accession>Q1J9E5</accession>
<proteinExistence type="inferred from homology"/>
<sequence>MAEITAKLVKELREKSGAGVMDAKKALVETDGDMDKAVELLREKGMAKAAKKADRVAAEGLTGVYVHGNVAAVVEVNAETDFVAKNAQFVELVNATAKVIAEGKPANNDEALALVMPSGETLAEAYVNATATIGEKISFRRFALIEKTDEQHFGAYQHNGGRIGVISVVEGGDDALAKQVSMHIAAMKPTVLSYTELDAQFIKDELAQLNHAIELDNESRAMVDKPALPFLKYGSKAQLSDDVITAAEADIKAELAAEGKPEKIWDKIIPGKMDRFMLDNTKVDQAYTLLAQVYIMDDSKTVEAYLDSVNAKAIAFARFEVGEGIEKKANDFESEVAATMAAALNN</sequence>
<keyword id="KW-0963">Cytoplasm</keyword>
<keyword id="KW-0251">Elongation factor</keyword>
<keyword id="KW-0648">Protein biosynthesis</keyword>
<gene>
    <name evidence="1" type="primary">tsf</name>
    <name type="ordered locus">MGAS2096_Spy1814</name>
</gene>
<dbReference type="EMBL" id="CP000261">
    <property type="protein sequence ID" value="ABF36866.1"/>
    <property type="status" value="ALT_INIT"/>
    <property type="molecule type" value="Genomic_DNA"/>
</dbReference>
<dbReference type="SMR" id="Q1J9E5"/>
<dbReference type="KEGG" id="spj:MGAS2096_Spy1814"/>
<dbReference type="HOGENOM" id="CLU_047155_0_1_9"/>
<dbReference type="GO" id="GO:0005737">
    <property type="term" value="C:cytoplasm"/>
    <property type="evidence" value="ECO:0007669"/>
    <property type="project" value="UniProtKB-SubCell"/>
</dbReference>
<dbReference type="GO" id="GO:0003746">
    <property type="term" value="F:translation elongation factor activity"/>
    <property type="evidence" value="ECO:0007669"/>
    <property type="project" value="UniProtKB-UniRule"/>
</dbReference>
<dbReference type="CDD" id="cd14275">
    <property type="entry name" value="UBA_EF-Ts"/>
    <property type="match status" value="1"/>
</dbReference>
<dbReference type="FunFam" id="1.10.286.20:FF:000004">
    <property type="entry name" value="Elongation factor Ts"/>
    <property type="match status" value="1"/>
</dbReference>
<dbReference type="FunFam" id="1.10.8.10:FF:000001">
    <property type="entry name" value="Elongation factor Ts"/>
    <property type="match status" value="1"/>
</dbReference>
<dbReference type="FunFam" id="3.30.479.20:FF:000013">
    <property type="entry name" value="Elongation factor Ts"/>
    <property type="match status" value="1"/>
</dbReference>
<dbReference type="Gene3D" id="1.10.286.20">
    <property type="match status" value="1"/>
</dbReference>
<dbReference type="Gene3D" id="1.10.8.10">
    <property type="entry name" value="DNA helicase RuvA subunit, C-terminal domain"/>
    <property type="match status" value="1"/>
</dbReference>
<dbReference type="Gene3D" id="3.30.479.20">
    <property type="entry name" value="Elongation factor Ts, dimerisation domain"/>
    <property type="match status" value="2"/>
</dbReference>
<dbReference type="HAMAP" id="MF_00050">
    <property type="entry name" value="EF_Ts"/>
    <property type="match status" value="1"/>
</dbReference>
<dbReference type="InterPro" id="IPR036402">
    <property type="entry name" value="EF-Ts_dimer_sf"/>
</dbReference>
<dbReference type="InterPro" id="IPR001816">
    <property type="entry name" value="Transl_elong_EFTs/EF1B"/>
</dbReference>
<dbReference type="InterPro" id="IPR014039">
    <property type="entry name" value="Transl_elong_EFTs/EF1B_dimer"/>
</dbReference>
<dbReference type="InterPro" id="IPR018101">
    <property type="entry name" value="Transl_elong_Ts_CS"/>
</dbReference>
<dbReference type="InterPro" id="IPR009060">
    <property type="entry name" value="UBA-like_sf"/>
</dbReference>
<dbReference type="NCBIfam" id="TIGR00116">
    <property type="entry name" value="tsf"/>
    <property type="match status" value="1"/>
</dbReference>
<dbReference type="PANTHER" id="PTHR11741">
    <property type="entry name" value="ELONGATION FACTOR TS"/>
    <property type="match status" value="1"/>
</dbReference>
<dbReference type="PANTHER" id="PTHR11741:SF0">
    <property type="entry name" value="ELONGATION FACTOR TS, MITOCHONDRIAL"/>
    <property type="match status" value="1"/>
</dbReference>
<dbReference type="Pfam" id="PF00889">
    <property type="entry name" value="EF_TS"/>
    <property type="match status" value="1"/>
</dbReference>
<dbReference type="SUPFAM" id="SSF54713">
    <property type="entry name" value="Elongation factor Ts (EF-Ts), dimerisation domain"/>
    <property type="match status" value="1"/>
</dbReference>
<dbReference type="SUPFAM" id="SSF46934">
    <property type="entry name" value="UBA-like"/>
    <property type="match status" value="1"/>
</dbReference>
<dbReference type="PROSITE" id="PS01126">
    <property type="entry name" value="EF_TS_1"/>
    <property type="match status" value="1"/>
</dbReference>
<dbReference type="PROSITE" id="PS01127">
    <property type="entry name" value="EF_TS_2"/>
    <property type="match status" value="1"/>
</dbReference>
<comment type="function">
    <text evidence="1">Associates with the EF-Tu.GDP complex and induces the exchange of GDP to GTP. It remains bound to the aminoacyl-tRNA.EF-Tu.GTP complex up to the GTP hydrolysis stage on the ribosome.</text>
</comment>
<comment type="subcellular location">
    <subcellularLocation>
        <location evidence="1">Cytoplasm</location>
    </subcellularLocation>
</comment>
<comment type="similarity">
    <text evidence="1">Belongs to the EF-Ts family.</text>
</comment>
<comment type="sequence caution" evidence="2">
    <conflict type="erroneous initiation">
        <sequence resource="EMBL-CDS" id="ABF36866"/>
    </conflict>
</comment>
<reference key="1">
    <citation type="journal article" date="2006" name="Proc. Natl. Acad. Sci. U.S.A.">
        <title>Molecular genetic anatomy of inter- and intraserotype variation in the human bacterial pathogen group A Streptococcus.</title>
        <authorList>
            <person name="Beres S.B."/>
            <person name="Richter E.W."/>
            <person name="Nagiec M.J."/>
            <person name="Sumby P."/>
            <person name="Porcella S.F."/>
            <person name="DeLeo F.R."/>
            <person name="Musser J.M."/>
        </authorList>
    </citation>
    <scope>NUCLEOTIDE SEQUENCE [LARGE SCALE GENOMIC DNA]</scope>
    <source>
        <strain>MGAS2096</strain>
    </source>
</reference>
<evidence type="ECO:0000255" key="1">
    <source>
        <dbReference type="HAMAP-Rule" id="MF_00050"/>
    </source>
</evidence>
<evidence type="ECO:0000305" key="2"/>
<organism>
    <name type="scientific">Streptococcus pyogenes serotype M12 (strain MGAS2096)</name>
    <dbReference type="NCBI Taxonomy" id="370553"/>
    <lineage>
        <taxon>Bacteria</taxon>
        <taxon>Bacillati</taxon>
        <taxon>Bacillota</taxon>
        <taxon>Bacilli</taxon>
        <taxon>Lactobacillales</taxon>
        <taxon>Streptococcaceae</taxon>
        <taxon>Streptococcus</taxon>
    </lineage>
</organism>
<name>EFTS_STRPB</name>